<accession>Q5E424</accession>
<name>SYY_ALIF1</name>
<gene>
    <name evidence="1" type="primary">tyrS</name>
    <name type="ordered locus">VF_1727</name>
</gene>
<dbReference type="EC" id="6.1.1.1" evidence="1"/>
<dbReference type="EMBL" id="CP000020">
    <property type="protein sequence ID" value="AAW86222.1"/>
    <property type="molecule type" value="Genomic_DNA"/>
</dbReference>
<dbReference type="RefSeq" id="WP_011262278.1">
    <property type="nucleotide sequence ID" value="NZ_CAWLES010000001.1"/>
</dbReference>
<dbReference type="RefSeq" id="YP_205110.1">
    <property type="nucleotide sequence ID" value="NC_006840.2"/>
</dbReference>
<dbReference type="SMR" id="Q5E424"/>
<dbReference type="STRING" id="312309.VF_1727"/>
<dbReference type="EnsemblBacteria" id="AAW86222">
    <property type="protein sequence ID" value="AAW86222"/>
    <property type="gene ID" value="VF_1727"/>
</dbReference>
<dbReference type="GeneID" id="54164424"/>
<dbReference type="KEGG" id="vfi:VF_1727"/>
<dbReference type="PATRIC" id="fig|312309.11.peg.1752"/>
<dbReference type="eggNOG" id="COG0162">
    <property type="taxonomic scope" value="Bacteria"/>
</dbReference>
<dbReference type="HOGENOM" id="CLU_024003_0_3_6"/>
<dbReference type="OrthoDB" id="9804243at2"/>
<dbReference type="Proteomes" id="UP000000537">
    <property type="component" value="Chromosome I"/>
</dbReference>
<dbReference type="GO" id="GO:0005829">
    <property type="term" value="C:cytosol"/>
    <property type="evidence" value="ECO:0007669"/>
    <property type="project" value="TreeGrafter"/>
</dbReference>
<dbReference type="GO" id="GO:0005524">
    <property type="term" value="F:ATP binding"/>
    <property type="evidence" value="ECO:0007669"/>
    <property type="project" value="UniProtKB-UniRule"/>
</dbReference>
<dbReference type="GO" id="GO:0003723">
    <property type="term" value="F:RNA binding"/>
    <property type="evidence" value="ECO:0007669"/>
    <property type="project" value="UniProtKB-KW"/>
</dbReference>
<dbReference type="GO" id="GO:0004831">
    <property type="term" value="F:tyrosine-tRNA ligase activity"/>
    <property type="evidence" value="ECO:0007669"/>
    <property type="project" value="UniProtKB-UniRule"/>
</dbReference>
<dbReference type="GO" id="GO:0006437">
    <property type="term" value="P:tyrosyl-tRNA aminoacylation"/>
    <property type="evidence" value="ECO:0007669"/>
    <property type="project" value="UniProtKB-UniRule"/>
</dbReference>
<dbReference type="CDD" id="cd00165">
    <property type="entry name" value="S4"/>
    <property type="match status" value="1"/>
</dbReference>
<dbReference type="CDD" id="cd00805">
    <property type="entry name" value="TyrRS_core"/>
    <property type="match status" value="1"/>
</dbReference>
<dbReference type="FunFam" id="1.10.240.10:FF:000001">
    <property type="entry name" value="Tyrosine--tRNA ligase"/>
    <property type="match status" value="1"/>
</dbReference>
<dbReference type="FunFam" id="3.40.50.620:FF:000008">
    <property type="entry name" value="Tyrosine--tRNA ligase"/>
    <property type="match status" value="1"/>
</dbReference>
<dbReference type="Gene3D" id="3.40.50.620">
    <property type="entry name" value="HUPs"/>
    <property type="match status" value="1"/>
</dbReference>
<dbReference type="Gene3D" id="3.10.290.10">
    <property type="entry name" value="RNA-binding S4 domain"/>
    <property type="match status" value="1"/>
</dbReference>
<dbReference type="Gene3D" id="1.10.240.10">
    <property type="entry name" value="Tyrosyl-Transfer RNA Synthetase"/>
    <property type="match status" value="1"/>
</dbReference>
<dbReference type="HAMAP" id="MF_02006">
    <property type="entry name" value="Tyr_tRNA_synth_type1"/>
    <property type="match status" value="1"/>
</dbReference>
<dbReference type="InterPro" id="IPR002305">
    <property type="entry name" value="aa-tRNA-synth_Ic"/>
</dbReference>
<dbReference type="InterPro" id="IPR014729">
    <property type="entry name" value="Rossmann-like_a/b/a_fold"/>
</dbReference>
<dbReference type="InterPro" id="IPR036986">
    <property type="entry name" value="S4_RNA-bd_sf"/>
</dbReference>
<dbReference type="InterPro" id="IPR054608">
    <property type="entry name" value="SYY-like_C"/>
</dbReference>
<dbReference type="InterPro" id="IPR002307">
    <property type="entry name" value="Tyr-tRNA-ligase"/>
</dbReference>
<dbReference type="InterPro" id="IPR024088">
    <property type="entry name" value="Tyr-tRNA-ligase_bac-type"/>
</dbReference>
<dbReference type="InterPro" id="IPR024107">
    <property type="entry name" value="Tyr-tRNA-ligase_bac_1"/>
</dbReference>
<dbReference type="NCBIfam" id="TIGR00234">
    <property type="entry name" value="tyrS"/>
    <property type="match status" value="1"/>
</dbReference>
<dbReference type="PANTHER" id="PTHR11766:SF0">
    <property type="entry name" value="TYROSINE--TRNA LIGASE, MITOCHONDRIAL"/>
    <property type="match status" value="1"/>
</dbReference>
<dbReference type="PANTHER" id="PTHR11766">
    <property type="entry name" value="TYROSYL-TRNA SYNTHETASE"/>
    <property type="match status" value="1"/>
</dbReference>
<dbReference type="Pfam" id="PF22421">
    <property type="entry name" value="SYY_C-terminal"/>
    <property type="match status" value="1"/>
</dbReference>
<dbReference type="Pfam" id="PF00579">
    <property type="entry name" value="tRNA-synt_1b"/>
    <property type="match status" value="1"/>
</dbReference>
<dbReference type="PRINTS" id="PR01040">
    <property type="entry name" value="TRNASYNTHTYR"/>
</dbReference>
<dbReference type="SUPFAM" id="SSF55174">
    <property type="entry name" value="Alpha-L RNA-binding motif"/>
    <property type="match status" value="1"/>
</dbReference>
<dbReference type="SUPFAM" id="SSF52374">
    <property type="entry name" value="Nucleotidylyl transferase"/>
    <property type="match status" value="1"/>
</dbReference>
<dbReference type="PROSITE" id="PS50889">
    <property type="entry name" value="S4"/>
    <property type="match status" value="1"/>
</dbReference>
<keyword id="KW-0030">Aminoacyl-tRNA synthetase</keyword>
<keyword id="KW-0067">ATP-binding</keyword>
<keyword id="KW-0963">Cytoplasm</keyword>
<keyword id="KW-0436">Ligase</keyword>
<keyword id="KW-0547">Nucleotide-binding</keyword>
<keyword id="KW-0648">Protein biosynthesis</keyword>
<keyword id="KW-1185">Reference proteome</keyword>
<keyword id="KW-0694">RNA-binding</keyword>
<evidence type="ECO:0000255" key="1">
    <source>
        <dbReference type="HAMAP-Rule" id="MF_02006"/>
    </source>
</evidence>
<proteinExistence type="inferred from homology"/>
<comment type="function">
    <text evidence="1">Catalyzes the attachment of tyrosine to tRNA(Tyr) in a two-step reaction: tyrosine is first activated by ATP to form Tyr-AMP and then transferred to the acceptor end of tRNA(Tyr).</text>
</comment>
<comment type="catalytic activity">
    <reaction evidence="1">
        <text>tRNA(Tyr) + L-tyrosine + ATP = L-tyrosyl-tRNA(Tyr) + AMP + diphosphate + H(+)</text>
        <dbReference type="Rhea" id="RHEA:10220"/>
        <dbReference type="Rhea" id="RHEA-COMP:9706"/>
        <dbReference type="Rhea" id="RHEA-COMP:9707"/>
        <dbReference type="ChEBI" id="CHEBI:15378"/>
        <dbReference type="ChEBI" id="CHEBI:30616"/>
        <dbReference type="ChEBI" id="CHEBI:33019"/>
        <dbReference type="ChEBI" id="CHEBI:58315"/>
        <dbReference type="ChEBI" id="CHEBI:78442"/>
        <dbReference type="ChEBI" id="CHEBI:78536"/>
        <dbReference type="ChEBI" id="CHEBI:456215"/>
        <dbReference type="EC" id="6.1.1.1"/>
    </reaction>
</comment>
<comment type="subunit">
    <text evidence="1">Homodimer.</text>
</comment>
<comment type="subcellular location">
    <subcellularLocation>
        <location evidence="1">Cytoplasm</location>
    </subcellularLocation>
</comment>
<comment type="similarity">
    <text evidence="1">Belongs to the class-I aminoacyl-tRNA synthetase family. TyrS type 1 subfamily.</text>
</comment>
<organism>
    <name type="scientific">Aliivibrio fischeri (strain ATCC 700601 / ES114)</name>
    <name type="common">Vibrio fischeri</name>
    <dbReference type="NCBI Taxonomy" id="312309"/>
    <lineage>
        <taxon>Bacteria</taxon>
        <taxon>Pseudomonadati</taxon>
        <taxon>Pseudomonadota</taxon>
        <taxon>Gammaproteobacteria</taxon>
        <taxon>Vibrionales</taxon>
        <taxon>Vibrionaceae</taxon>
        <taxon>Aliivibrio</taxon>
    </lineage>
</organism>
<feature type="chain" id="PRO_0000234809" description="Tyrosine--tRNA ligase">
    <location>
        <begin position="1"/>
        <end position="426"/>
    </location>
</feature>
<feature type="domain" description="S4 RNA-binding" evidence="1">
    <location>
        <begin position="359"/>
        <end position="426"/>
    </location>
</feature>
<feature type="short sequence motif" description="'HIGH' region">
    <location>
        <begin position="43"/>
        <end position="52"/>
    </location>
</feature>
<feature type="short sequence motif" description="'KMSKS' region">
    <location>
        <begin position="236"/>
        <end position="240"/>
    </location>
</feature>
<feature type="binding site" evidence="1">
    <location>
        <position position="38"/>
    </location>
    <ligand>
        <name>L-tyrosine</name>
        <dbReference type="ChEBI" id="CHEBI:58315"/>
    </ligand>
</feature>
<feature type="binding site" evidence="1">
    <location>
        <position position="176"/>
    </location>
    <ligand>
        <name>L-tyrosine</name>
        <dbReference type="ChEBI" id="CHEBI:58315"/>
    </ligand>
</feature>
<feature type="binding site" evidence="1">
    <location>
        <position position="180"/>
    </location>
    <ligand>
        <name>L-tyrosine</name>
        <dbReference type="ChEBI" id="CHEBI:58315"/>
    </ligand>
</feature>
<feature type="binding site" evidence="1">
    <location>
        <position position="239"/>
    </location>
    <ligand>
        <name>ATP</name>
        <dbReference type="ChEBI" id="CHEBI:30616"/>
    </ligand>
</feature>
<sequence length="426" mass="46880">MTATNELLQDLKARGLIAQCTADEELAEHLSTDCRTLYCGFDPTADSLHIGSLVPLLVLKRFQQAGHKPLALVGGATGLIGDPSFKAAERQLNTNEVVGDWVNKIKAQVSAFVDFTEEKNGAEVVNNLDWIGQINVIEFMRDVGKHFSVNAMIQKESVKQRIDREGSGISFTEFSYMLLQSYDFAALNKAKECTLQIGGSDQWGNITGGIDLTRRMNRNKVFGLTLPLVTKSDGTKFGKTESGTIWLDSNKTSPYAFYQFWLGTADADVYNFLRFFTFLTVEEIAAVEESDKSVQGRPEGQGILAREVTRLVHGEEGLASAERITKALFSGDLSSLTETDLAQLALDGLPSTELEASEQTIVEVLTQSELAKSNKMAREFIGNGAVSVNGEKVADTEAVLKKEDALFGKYSVIKRGKKLFNLYIWK</sequence>
<protein>
    <recommendedName>
        <fullName evidence="1">Tyrosine--tRNA ligase</fullName>
        <ecNumber evidence="1">6.1.1.1</ecNumber>
    </recommendedName>
    <alternativeName>
        <fullName evidence="1">Tyrosyl-tRNA synthetase</fullName>
        <shortName evidence="1">TyrRS</shortName>
    </alternativeName>
</protein>
<reference key="1">
    <citation type="journal article" date="2005" name="Proc. Natl. Acad. Sci. U.S.A.">
        <title>Complete genome sequence of Vibrio fischeri: a symbiotic bacterium with pathogenic congeners.</title>
        <authorList>
            <person name="Ruby E.G."/>
            <person name="Urbanowski M."/>
            <person name="Campbell J."/>
            <person name="Dunn A."/>
            <person name="Faini M."/>
            <person name="Gunsalus R."/>
            <person name="Lostroh P."/>
            <person name="Lupp C."/>
            <person name="McCann J."/>
            <person name="Millikan D."/>
            <person name="Schaefer A."/>
            <person name="Stabb E."/>
            <person name="Stevens A."/>
            <person name="Visick K."/>
            <person name="Whistler C."/>
            <person name="Greenberg E.P."/>
        </authorList>
    </citation>
    <scope>NUCLEOTIDE SEQUENCE [LARGE SCALE GENOMIC DNA]</scope>
    <source>
        <strain>ATCC 700601 / ES114</strain>
    </source>
</reference>